<sequence>MNSIWARLRLASSQLPIGGYSYSQGLEAALDNGWVRDAESARTWLVDQLQLNLARFEAPLLAGLLRAALIGDWAACDAASERHRASRETRELAQESRQMGFSLHQLLEALPELDAPGRAWLARQDPPNLAAAWAMAARAWRLDAEEALSAWFWSWLENQLAVLMKTLPLGQLAAQKLASSLLPELDRACAEALRRPAVEGSAAFGLALASMTHETQYSRLFRS</sequence>
<feature type="chain" id="PRO_0000287730" description="Urease accessory protein UreF">
    <location>
        <begin position="1"/>
        <end position="223"/>
    </location>
</feature>
<name>UREF_PSEAE</name>
<keyword id="KW-0143">Chaperone</keyword>
<keyword id="KW-0963">Cytoplasm</keyword>
<keyword id="KW-0996">Nickel insertion</keyword>
<keyword id="KW-1185">Reference proteome</keyword>
<accession>Q9HUS1</accession>
<comment type="function">
    <text evidence="1">Required for maturation of urease via the functional incorporation of the urease nickel metallocenter.</text>
</comment>
<comment type="subunit">
    <text evidence="1">UreD, UreF and UreG form a complex that acts as a GTP-hydrolysis-dependent molecular chaperone, activating the urease apoprotein by helping to assemble the nickel containing metallocenter of UreC. The UreE protein probably delivers the nickel.</text>
</comment>
<comment type="subcellular location">
    <subcellularLocation>
        <location evidence="1">Cytoplasm</location>
    </subcellularLocation>
</comment>
<comment type="similarity">
    <text evidence="1">Belongs to the UreF family.</text>
</comment>
<protein>
    <recommendedName>
        <fullName evidence="1">Urease accessory protein UreF</fullName>
    </recommendedName>
</protein>
<proteinExistence type="inferred from homology"/>
<evidence type="ECO:0000255" key="1">
    <source>
        <dbReference type="HAMAP-Rule" id="MF_01385"/>
    </source>
</evidence>
<organism>
    <name type="scientific">Pseudomonas aeruginosa (strain ATCC 15692 / DSM 22644 / CIP 104116 / JCM 14847 / LMG 12228 / 1C / PRS 101 / PAO1)</name>
    <dbReference type="NCBI Taxonomy" id="208964"/>
    <lineage>
        <taxon>Bacteria</taxon>
        <taxon>Pseudomonadati</taxon>
        <taxon>Pseudomonadota</taxon>
        <taxon>Gammaproteobacteria</taxon>
        <taxon>Pseudomonadales</taxon>
        <taxon>Pseudomonadaceae</taxon>
        <taxon>Pseudomonas</taxon>
    </lineage>
</organism>
<dbReference type="EMBL" id="AE004091">
    <property type="protein sequence ID" value="AAG08277.1"/>
    <property type="molecule type" value="Genomic_DNA"/>
</dbReference>
<dbReference type="PIR" id="F83034">
    <property type="entry name" value="F83034"/>
</dbReference>
<dbReference type="RefSeq" id="NP_253579.1">
    <property type="nucleotide sequence ID" value="NC_002516.2"/>
</dbReference>
<dbReference type="RefSeq" id="WP_003095528.1">
    <property type="nucleotide sequence ID" value="NZ_QZGE01000002.1"/>
</dbReference>
<dbReference type="SMR" id="Q9HUS1"/>
<dbReference type="STRING" id="208964.PA4892"/>
<dbReference type="PaxDb" id="208964-PA4892"/>
<dbReference type="DNASU" id="882295"/>
<dbReference type="GeneID" id="882295"/>
<dbReference type="KEGG" id="pae:PA4892"/>
<dbReference type="PATRIC" id="fig|208964.12.peg.5125"/>
<dbReference type="PseudoCAP" id="PA4892"/>
<dbReference type="HOGENOM" id="CLU_049215_2_1_6"/>
<dbReference type="InParanoid" id="Q9HUS1"/>
<dbReference type="OrthoDB" id="9798772at2"/>
<dbReference type="PhylomeDB" id="Q9HUS1"/>
<dbReference type="BioCyc" id="PAER208964:G1FZ6-5006-MONOMER"/>
<dbReference type="Proteomes" id="UP000002438">
    <property type="component" value="Chromosome"/>
</dbReference>
<dbReference type="GO" id="GO:0005737">
    <property type="term" value="C:cytoplasm"/>
    <property type="evidence" value="ECO:0007669"/>
    <property type="project" value="UniProtKB-SubCell"/>
</dbReference>
<dbReference type="GO" id="GO:0016151">
    <property type="term" value="F:nickel cation binding"/>
    <property type="evidence" value="ECO:0007669"/>
    <property type="project" value="UniProtKB-UniRule"/>
</dbReference>
<dbReference type="Gene3D" id="1.10.4190.10">
    <property type="entry name" value="Urease accessory protein UreF"/>
    <property type="match status" value="1"/>
</dbReference>
<dbReference type="HAMAP" id="MF_01385">
    <property type="entry name" value="UreF"/>
    <property type="match status" value="1"/>
</dbReference>
<dbReference type="InterPro" id="IPR002639">
    <property type="entry name" value="UreF"/>
</dbReference>
<dbReference type="InterPro" id="IPR038277">
    <property type="entry name" value="UreF_sf"/>
</dbReference>
<dbReference type="PANTHER" id="PTHR33620">
    <property type="entry name" value="UREASE ACCESSORY PROTEIN F"/>
    <property type="match status" value="1"/>
</dbReference>
<dbReference type="PANTHER" id="PTHR33620:SF1">
    <property type="entry name" value="UREASE ACCESSORY PROTEIN F"/>
    <property type="match status" value="1"/>
</dbReference>
<dbReference type="Pfam" id="PF01730">
    <property type="entry name" value="UreF"/>
    <property type="match status" value="1"/>
</dbReference>
<dbReference type="PIRSF" id="PIRSF009467">
    <property type="entry name" value="Ureas_acces_UreF"/>
    <property type="match status" value="1"/>
</dbReference>
<reference key="1">
    <citation type="journal article" date="2000" name="Nature">
        <title>Complete genome sequence of Pseudomonas aeruginosa PAO1, an opportunistic pathogen.</title>
        <authorList>
            <person name="Stover C.K."/>
            <person name="Pham X.-Q.T."/>
            <person name="Erwin A.L."/>
            <person name="Mizoguchi S.D."/>
            <person name="Warrener P."/>
            <person name="Hickey M.J."/>
            <person name="Brinkman F.S.L."/>
            <person name="Hufnagle W.O."/>
            <person name="Kowalik D.J."/>
            <person name="Lagrou M."/>
            <person name="Garber R.L."/>
            <person name="Goltry L."/>
            <person name="Tolentino E."/>
            <person name="Westbrock-Wadman S."/>
            <person name="Yuan Y."/>
            <person name="Brody L.L."/>
            <person name="Coulter S.N."/>
            <person name="Folger K.R."/>
            <person name="Kas A."/>
            <person name="Larbig K."/>
            <person name="Lim R.M."/>
            <person name="Smith K.A."/>
            <person name="Spencer D.H."/>
            <person name="Wong G.K.-S."/>
            <person name="Wu Z."/>
            <person name="Paulsen I.T."/>
            <person name="Reizer J."/>
            <person name="Saier M.H. Jr."/>
            <person name="Hancock R.E.W."/>
            <person name="Lory S."/>
            <person name="Olson M.V."/>
        </authorList>
    </citation>
    <scope>NUCLEOTIDE SEQUENCE [LARGE SCALE GENOMIC DNA]</scope>
    <source>
        <strain>ATCC 15692 / DSM 22644 / CIP 104116 / JCM 14847 / LMG 12228 / 1C / PRS 101 / PAO1</strain>
    </source>
</reference>
<gene>
    <name evidence="1" type="primary">ureF</name>
    <name type="ordered locus">PA4892</name>
</gene>